<reference key="1">
    <citation type="journal article" date="1999" name="Am. J. Respir. Cell Mol. Biol.">
        <title>Isolation of a gene product expressed by a subpopulation of human lung fibroblasts by differential display.</title>
        <authorList>
            <person name="Lurton J."/>
            <person name="Rose T.M."/>
            <person name="Raghu G."/>
            <person name="Narayanan A.S."/>
        </authorList>
    </citation>
    <scope>NUCLEOTIDE SEQUENCE [MRNA] (ISOFORM 1)</scope>
    <scope>TISSUE SPECIFICITY</scope>
    <scope>INDUCTION</scope>
    <scope>VARIANTS SER-55 AND ARG-94</scope>
    <source>
        <tissue>Lung</tissue>
    </source>
</reference>
<reference key="2">
    <citation type="submission" date="2005-07" db="EMBL/GenBank/DDBJ databases">
        <title>Cloning of a full-length Homo sapiens mRNA coding for a tetraspanin-like LR8 protein.</title>
        <authorList>
            <person name="Anton B."/>
            <person name="Matus M."/>
            <person name="Canseco J."/>
            <person name="Calva J.C."/>
            <person name="Flores A."/>
            <person name="Gonzaga R."/>
            <person name="Salazar A."/>
            <person name="Arreola R."/>
            <person name="Leff P."/>
        </authorList>
    </citation>
    <scope>NUCLEOTIDE SEQUENCE [MRNA] (ISOFORM 1)</scope>
    <scope>VARIANT ARG-94</scope>
    <source>
        <tissue>Brain</tissue>
    </source>
</reference>
<reference key="3">
    <citation type="journal article" date="2004" name="Nat. Genet.">
        <title>Complete sequencing and characterization of 21,243 full-length human cDNAs.</title>
        <authorList>
            <person name="Ota T."/>
            <person name="Suzuki Y."/>
            <person name="Nishikawa T."/>
            <person name="Otsuki T."/>
            <person name="Sugiyama T."/>
            <person name="Irie R."/>
            <person name="Wakamatsu A."/>
            <person name="Hayashi K."/>
            <person name="Sato H."/>
            <person name="Nagai K."/>
            <person name="Kimura K."/>
            <person name="Makita H."/>
            <person name="Sekine M."/>
            <person name="Obayashi M."/>
            <person name="Nishi T."/>
            <person name="Shibahara T."/>
            <person name="Tanaka T."/>
            <person name="Ishii S."/>
            <person name="Yamamoto J."/>
            <person name="Saito K."/>
            <person name="Kawai Y."/>
            <person name="Isono Y."/>
            <person name="Nakamura Y."/>
            <person name="Nagahari K."/>
            <person name="Murakami K."/>
            <person name="Yasuda T."/>
            <person name="Iwayanagi T."/>
            <person name="Wagatsuma M."/>
            <person name="Shiratori A."/>
            <person name="Sudo H."/>
            <person name="Hosoiri T."/>
            <person name="Kaku Y."/>
            <person name="Kodaira H."/>
            <person name="Kondo H."/>
            <person name="Sugawara M."/>
            <person name="Takahashi M."/>
            <person name="Kanda K."/>
            <person name="Yokoi T."/>
            <person name="Furuya T."/>
            <person name="Kikkawa E."/>
            <person name="Omura Y."/>
            <person name="Abe K."/>
            <person name="Kamihara K."/>
            <person name="Katsuta N."/>
            <person name="Sato K."/>
            <person name="Tanikawa M."/>
            <person name="Yamazaki M."/>
            <person name="Ninomiya K."/>
            <person name="Ishibashi T."/>
            <person name="Yamashita H."/>
            <person name="Murakawa K."/>
            <person name="Fujimori K."/>
            <person name="Tanai H."/>
            <person name="Kimata M."/>
            <person name="Watanabe M."/>
            <person name="Hiraoka S."/>
            <person name="Chiba Y."/>
            <person name="Ishida S."/>
            <person name="Ono Y."/>
            <person name="Takiguchi S."/>
            <person name="Watanabe S."/>
            <person name="Yosida M."/>
            <person name="Hotuta T."/>
            <person name="Kusano J."/>
            <person name="Kanehori K."/>
            <person name="Takahashi-Fujii A."/>
            <person name="Hara H."/>
            <person name="Tanase T.-O."/>
            <person name="Nomura Y."/>
            <person name="Togiya S."/>
            <person name="Komai F."/>
            <person name="Hara R."/>
            <person name="Takeuchi K."/>
            <person name="Arita M."/>
            <person name="Imose N."/>
            <person name="Musashino K."/>
            <person name="Yuuki H."/>
            <person name="Oshima A."/>
            <person name="Sasaki N."/>
            <person name="Aotsuka S."/>
            <person name="Yoshikawa Y."/>
            <person name="Matsunawa H."/>
            <person name="Ichihara T."/>
            <person name="Shiohata N."/>
            <person name="Sano S."/>
            <person name="Moriya S."/>
            <person name="Momiyama H."/>
            <person name="Satoh N."/>
            <person name="Takami S."/>
            <person name="Terashima Y."/>
            <person name="Suzuki O."/>
            <person name="Nakagawa S."/>
            <person name="Senoh A."/>
            <person name="Mizoguchi H."/>
            <person name="Goto Y."/>
            <person name="Shimizu F."/>
            <person name="Wakebe H."/>
            <person name="Hishigaki H."/>
            <person name="Watanabe T."/>
            <person name="Sugiyama A."/>
            <person name="Takemoto M."/>
            <person name="Kawakami B."/>
            <person name="Yamazaki M."/>
            <person name="Watanabe K."/>
            <person name="Kumagai A."/>
            <person name="Itakura S."/>
            <person name="Fukuzumi Y."/>
            <person name="Fujimori Y."/>
            <person name="Komiyama M."/>
            <person name="Tashiro H."/>
            <person name="Tanigami A."/>
            <person name="Fujiwara T."/>
            <person name="Ono T."/>
            <person name="Yamada K."/>
            <person name="Fujii Y."/>
            <person name="Ozaki K."/>
            <person name="Hirao M."/>
            <person name="Ohmori Y."/>
            <person name="Kawabata A."/>
            <person name="Hikiji T."/>
            <person name="Kobatake N."/>
            <person name="Inagaki H."/>
            <person name="Ikema Y."/>
            <person name="Okamoto S."/>
            <person name="Okitani R."/>
            <person name="Kawakami T."/>
            <person name="Noguchi S."/>
            <person name="Itoh T."/>
            <person name="Shigeta K."/>
            <person name="Senba T."/>
            <person name="Matsumura K."/>
            <person name="Nakajima Y."/>
            <person name="Mizuno T."/>
            <person name="Morinaga M."/>
            <person name="Sasaki M."/>
            <person name="Togashi T."/>
            <person name="Oyama M."/>
            <person name="Hata H."/>
            <person name="Watanabe M."/>
            <person name="Komatsu T."/>
            <person name="Mizushima-Sugano J."/>
            <person name="Satoh T."/>
            <person name="Shirai Y."/>
            <person name="Takahashi Y."/>
            <person name="Nakagawa K."/>
            <person name="Okumura K."/>
            <person name="Nagase T."/>
            <person name="Nomura N."/>
            <person name="Kikuchi H."/>
            <person name="Masuho Y."/>
            <person name="Yamashita R."/>
            <person name="Nakai K."/>
            <person name="Yada T."/>
            <person name="Nakamura Y."/>
            <person name="Ohara O."/>
            <person name="Isogai T."/>
            <person name="Sugano S."/>
        </authorList>
    </citation>
    <scope>NUCLEOTIDE SEQUENCE [LARGE SCALE MRNA] (ISOFORMS 1 AND 2)</scope>
    <source>
        <tissue>Macrophage</tissue>
        <tissue>Placenta</tissue>
    </source>
</reference>
<reference key="4">
    <citation type="journal article" date="2003" name="Nature">
        <title>The DNA sequence of human chromosome 7.</title>
        <authorList>
            <person name="Hillier L.W."/>
            <person name="Fulton R.S."/>
            <person name="Fulton L.A."/>
            <person name="Graves T.A."/>
            <person name="Pepin K.H."/>
            <person name="Wagner-McPherson C."/>
            <person name="Layman D."/>
            <person name="Maas J."/>
            <person name="Jaeger S."/>
            <person name="Walker R."/>
            <person name="Wylie K."/>
            <person name="Sekhon M."/>
            <person name="Becker M.C."/>
            <person name="O'Laughlin M.D."/>
            <person name="Schaller M.E."/>
            <person name="Fewell G.A."/>
            <person name="Delehaunty K.D."/>
            <person name="Miner T.L."/>
            <person name="Nash W.E."/>
            <person name="Cordes M."/>
            <person name="Du H."/>
            <person name="Sun H."/>
            <person name="Edwards J."/>
            <person name="Bradshaw-Cordum H."/>
            <person name="Ali J."/>
            <person name="Andrews S."/>
            <person name="Isak A."/>
            <person name="Vanbrunt A."/>
            <person name="Nguyen C."/>
            <person name="Du F."/>
            <person name="Lamar B."/>
            <person name="Courtney L."/>
            <person name="Kalicki J."/>
            <person name="Ozersky P."/>
            <person name="Bielicki L."/>
            <person name="Scott K."/>
            <person name="Holmes A."/>
            <person name="Harkins R."/>
            <person name="Harris A."/>
            <person name="Strong C.M."/>
            <person name="Hou S."/>
            <person name="Tomlinson C."/>
            <person name="Dauphin-Kohlberg S."/>
            <person name="Kozlowicz-Reilly A."/>
            <person name="Leonard S."/>
            <person name="Rohlfing T."/>
            <person name="Rock S.M."/>
            <person name="Tin-Wollam A.-M."/>
            <person name="Abbott A."/>
            <person name="Minx P."/>
            <person name="Maupin R."/>
            <person name="Strowmatt C."/>
            <person name="Latreille P."/>
            <person name="Miller N."/>
            <person name="Johnson D."/>
            <person name="Murray J."/>
            <person name="Woessner J.P."/>
            <person name="Wendl M.C."/>
            <person name="Yang S.-P."/>
            <person name="Schultz B.R."/>
            <person name="Wallis J.W."/>
            <person name="Spieth J."/>
            <person name="Bieri T.A."/>
            <person name="Nelson J.O."/>
            <person name="Berkowicz N."/>
            <person name="Wohldmann P.E."/>
            <person name="Cook L.L."/>
            <person name="Hickenbotham M.T."/>
            <person name="Eldred J."/>
            <person name="Williams D."/>
            <person name="Bedell J.A."/>
            <person name="Mardis E.R."/>
            <person name="Clifton S.W."/>
            <person name="Chissoe S.L."/>
            <person name="Marra M.A."/>
            <person name="Raymond C."/>
            <person name="Haugen E."/>
            <person name="Gillett W."/>
            <person name="Zhou Y."/>
            <person name="James R."/>
            <person name="Phelps K."/>
            <person name="Iadanoto S."/>
            <person name="Bubb K."/>
            <person name="Simms E."/>
            <person name="Levy R."/>
            <person name="Clendenning J."/>
            <person name="Kaul R."/>
            <person name="Kent W.J."/>
            <person name="Furey T.S."/>
            <person name="Baertsch R.A."/>
            <person name="Brent M.R."/>
            <person name="Keibler E."/>
            <person name="Flicek P."/>
            <person name="Bork P."/>
            <person name="Suyama M."/>
            <person name="Bailey J.A."/>
            <person name="Portnoy M.E."/>
            <person name="Torrents D."/>
            <person name="Chinwalla A.T."/>
            <person name="Gish W.R."/>
            <person name="Eddy S.R."/>
            <person name="McPherson J.D."/>
            <person name="Olson M.V."/>
            <person name="Eichler E.E."/>
            <person name="Green E.D."/>
            <person name="Waterston R.H."/>
            <person name="Wilson R.K."/>
        </authorList>
    </citation>
    <scope>NUCLEOTIDE SEQUENCE [LARGE SCALE GENOMIC DNA]</scope>
</reference>
<reference key="5">
    <citation type="submission" date="2005-09" db="EMBL/GenBank/DDBJ databases">
        <authorList>
            <person name="Mural R.J."/>
            <person name="Istrail S."/>
            <person name="Sutton G.G."/>
            <person name="Florea L."/>
            <person name="Halpern A.L."/>
            <person name="Mobarry C.M."/>
            <person name="Lippert R."/>
            <person name="Walenz B."/>
            <person name="Shatkay H."/>
            <person name="Dew I."/>
            <person name="Miller J.R."/>
            <person name="Flanigan M.J."/>
            <person name="Edwards N.J."/>
            <person name="Bolanos R."/>
            <person name="Fasulo D."/>
            <person name="Halldorsson B.V."/>
            <person name="Hannenhalli S."/>
            <person name="Turner R."/>
            <person name="Yooseph S."/>
            <person name="Lu F."/>
            <person name="Nusskern D.R."/>
            <person name="Shue B.C."/>
            <person name="Zheng X.H."/>
            <person name="Zhong F."/>
            <person name="Delcher A.L."/>
            <person name="Huson D.H."/>
            <person name="Kravitz S.A."/>
            <person name="Mouchard L."/>
            <person name="Reinert K."/>
            <person name="Remington K.A."/>
            <person name="Clark A.G."/>
            <person name="Waterman M.S."/>
            <person name="Eichler E.E."/>
            <person name="Adams M.D."/>
            <person name="Hunkapiller M.W."/>
            <person name="Myers E.W."/>
            <person name="Venter J.C."/>
        </authorList>
    </citation>
    <scope>NUCLEOTIDE SEQUENCE [LARGE SCALE GENOMIC DNA]</scope>
</reference>
<reference key="6">
    <citation type="journal article" date="2004" name="Genome Res.">
        <title>The status, quality, and expansion of the NIH full-length cDNA project: the Mammalian Gene Collection (MGC).</title>
        <authorList>
            <consortium name="The MGC Project Team"/>
        </authorList>
    </citation>
    <scope>NUCLEOTIDE SEQUENCE [LARGE SCALE MRNA] (ISOFORM 1)</scope>
    <scope>VARIANTS ARG-94 AND THR-134</scope>
    <source>
        <tissue>Lung</tissue>
        <tissue>Placenta</tissue>
    </source>
</reference>
<reference key="7">
    <citation type="journal article" date="2005" name="Am. J. Transplant.">
        <title>Identification of a new member of the CD20/FcepsilonRIbeta family overexpressed in tolerated allografts.</title>
        <authorList>
            <person name="Louvet C."/>
            <person name="Chiffoleau E."/>
            <person name="Heslan M."/>
            <person name="Tesson L."/>
            <person name="Heslan J.-M."/>
            <person name="Brion R."/>
            <person name="Beriou G."/>
            <person name="Guillonneau C."/>
            <person name="Khalife J."/>
            <person name="Anegon I."/>
            <person name="Cuturi M.-C."/>
        </authorList>
    </citation>
    <scope>INDUCTION</scope>
</reference>
<reference key="8">
    <citation type="journal article" date="2014" name="J. Proteomics">
        <title>An enzyme assisted RP-RPLC approach for in-depth analysis of human liver phosphoproteome.</title>
        <authorList>
            <person name="Bian Y."/>
            <person name="Song C."/>
            <person name="Cheng K."/>
            <person name="Dong M."/>
            <person name="Wang F."/>
            <person name="Huang J."/>
            <person name="Sun D."/>
            <person name="Wang L."/>
            <person name="Ye M."/>
            <person name="Zou H."/>
        </authorList>
    </citation>
    <scope>PHOSPHORYLATION [LARGE SCALE ANALYSIS] AT SER-236; SER-245 AND SER-258</scope>
    <scope>IDENTIFICATION BY MASS SPECTROMETRY [LARGE SCALE ANALYSIS]</scope>
    <source>
        <tissue>Liver</tissue>
    </source>
</reference>
<dbReference type="EMBL" id="AF115384">
    <property type="protein sequence ID" value="AAD23440.1"/>
    <property type="molecule type" value="mRNA"/>
</dbReference>
<dbReference type="EMBL" id="DQ144974">
    <property type="protein sequence ID" value="AAZ75648.1"/>
    <property type="molecule type" value="mRNA"/>
</dbReference>
<dbReference type="EMBL" id="AK129525">
    <property type="status" value="NOT_ANNOTATED_CDS"/>
    <property type="molecule type" value="mRNA"/>
</dbReference>
<dbReference type="EMBL" id="AK315575">
    <property type="protein sequence ID" value="BAG37949.1"/>
    <property type="molecule type" value="mRNA"/>
</dbReference>
<dbReference type="EMBL" id="AC006479">
    <property type="status" value="NOT_ANNOTATED_CDS"/>
    <property type="molecule type" value="Genomic_DNA"/>
</dbReference>
<dbReference type="EMBL" id="CH471173">
    <property type="protein sequence ID" value="EAW54077.1"/>
    <property type="molecule type" value="Genomic_DNA"/>
</dbReference>
<dbReference type="EMBL" id="CH471173">
    <property type="protein sequence ID" value="EAW54078.1"/>
    <property type="molecule type" value="Genomic_DNA"/>
</dbReference>
<dbReference type="EMBL" id="CH471173">
    <property type="protein sequence ID" value="EAW54079.1"/>
    <property type="molecule type" value="Genomic_DNA"/>
</dbReference>
<dbReference type="EMBL" id="CH471173">
    <property type="protein sequence ID" value="EAW54080.1"/>
    <property type="molecule type" value="Genomic_DNA"/>
</dbReference>
<dbReference type="EMBL" id="BC004358">
    <property type="protein sequence ID" value="AAH04358.1"/>
    <property type="molecule type" value="mRNA"/>
</dbReference>
<dbReference type="EMBL" id="BC014586">
    <property type="protein sequence ID" value="AAH14586.1"/>
    <property type="molecule type" value="mRNA"/>
</dbReference>
<dbReference type="EMBL" id="BC091471">
    <property type="protein sequence ID" value="AAH91471.1"/>
    <property type="status" value="ALT_SEQ"/>
    <property type="molecule type" value="mRNA"/>
</dbReference>
<dbReference type="CCDS" id="CCDS47746.1">
    <molecule id="Q3YBM2-2"/>
</dbReference>
<dbReference type="CCDS" id="CCDS5908.1">
    <molecule id="Q3YBM2-1"/>
</dbReference>
<dbReference type="RefSeq" id="NP_001094781.1">
    <molecule id="Q3YBM2-1"/>
    <property type="nucleotide sequence ID" value="NM_001101311.2"/>
</dbReference>
<dbReference type="RefSeq" id="NP_001094782.1">
    <molecule id="Q3YBM2-1"/>
    <property type="nucleotide sequence ID" value="NM_001101312.2"/>
</dbReference>
<dbReference type="RefSeq" id="NP_001094784.1">
    <molecule id="Q3YBM2-2"/>
    <property type="nucleotide sequence ID" value="NM_001101314.2"/>
</dbReference>
<dbReference type="RefSeq" id="NP_054739.3">
    <molecule id="Q3YBM2-1"/>
    <property type="nucleotide sequence ID" value="NM_014020.3"/>
</dbReference>
<dbReference type="RefSeq" id="XP_006715996.2">
    <molecule id="Q3YBM2-2"/>
    <property type="nucleotide sequence ID" value="XM_006715933.5"/>
</dbReference>
<dbReference type="RefSeq" id="XP_024302502.1">
    <molecule id="Q3YBM2-1"/>
    <property type="nucleotide sequence ID" value="XM_024446734.2"/>
</dbReference>
<dbReference type="RefSeq" id="XP_047276215.1">
    <molecule id="Q3YBM2-1"/>
    <property type="nucleotide sequence ID" value="XM_047420259.1"/>
</dbReference>
<dbReference type="BioGRID" id="118786">
    <property type="interactions" value="28"/>
</dbReference>
<dbReference type="FunCoup" id="Q3YBM2">
    <property type="interactions" value="1"/>
</dbReference>
<dbReference type="IntAct" id="Q3YBM2">
    <property type="interactions" value="31"/>
</dbReference>
<dbReference type="MINT" id="Q3YBM2"/>
<dbReference type="STRING" id="9606.ENSP00000410269"/>
<dbReference type="TCDB" id="1.A.37.8.1">
    <property type="family name" value="the cd20 ca(2+) channel (cd20) family"/>
</dbReference>
<dbReference type="GlyGen" id="Q3YBM2">
    <property type="glycosylation" value="1 site"/>
</dbReference>
<dbReference type="iPTMnet" id="Q3YBM2"/>
<dbReference type="PhosphoSitePlus" id="Q3YBM2"/>
<dbReference type="BioMuta" id="TMEM176B"/>
<dbReference type="DMDM" id="313104018"/>
<dbReference type="jPOST" id="Q3YBM2"/>
<dbReference type="MassIVE" id="Q3YBM2"/>
<dbReference type="PaxDb" id="9606-ENSP00000410269"/>
<dbReference type="PeptideAtlas" id="Q3YBM2"/>
<dbReference type="ProteomicsDB" id="19087"/>
<dbReference type="ProteomicsDB" id="61891">
    <molecule id="Q3YBM2-1"/>
</dbReference>
<dbReference type="Antibodypedia" id="32900">
    <property type="antibodies" value="92 antibodies from 19 providers"/>
</dbReference>
<dbReference type="DNASU" id="28959"/>
<dbReference type="Ensembl" id="ENST00000326442.10">
    <molecule id="Q3YBM2-1"/>
    <property type="protein sequence ID" value="ENSP00000318409.5"/>
    <property type="gene ID" value="ENSG00000106565.19"/>
</dbReference>
<dbReference type="Ensembl" id="ENST00000429904.6">
    <molecule id="Q3YBM2-1"/>
    <property type="protein sequence ID" value="ENSP00000397810.2"/>
    <property type="gene ID" value="ENSG00000106565.19"/>
</dbReference>
<dbReference type="Ensembl" id="ENST00000447204.6">
    <molecule id="Q3YBM2-1"/>
    <property type="protein sequence ID" value="ENSP00000410269.2"/>
    <property type="gene ID" value="ENSG00000106565.19"/>
</dbReference>
<dbReference type="Ensembl" id="ENST00000450753.2">
    <molecule id="Q3YBM2-2"/>
    <property type="protein sequence ID" value="ENSP00000404831.2"/>
    <property type="gene ID" value="ENSG00000106565.19"/>
</dbReference>
<dbReference type="Ensembl" id="ENST00000492607.5">
    <molecule id="Q3YBM2-1"/>
    <property type="protein sequence ID" value="ENSP00000419258.1"/>
    <property type="gene ID" value="ENSG00000106565.19"/>
</dbReference>
<dbReference type="GeneID" id="28959"/>
<dbReference type="KEGG" id="hsa:28959"/>
<dbReference type="MANE-Select" id="ENST00000326442.10">
    <property type="protein sequence ID" value="ENSP00000318409.5"/>
    <property type="RefSeq nucleotide sequence ID" value="NM_001101312.2"/>
    <property type="RefSeq protein sequence ID" value="NP_001094782.1"/>
</dbReference>
<dbReference type="UCSC" id="uc003whu.5">
    <molecule id="Q3YBM2-1"/>
    <property type="organism name" value="human"/>
</dbReference>
<dbReference type="AGR" id="HGNC:29596"/>
<dbReference type="CTD" id="28959"/>
<dbReference type="DisGeNET" id="28959"/>
<dbReference type="GeneCards" id="TMEM176B"/>
<dbReference type="HGNC" id="HGNC:29596">
    <property type="gene designation" value="TMEM176B"/>
</dbReference>
<dbReference type="HPA" id="ENSG00000106565">
    <property type="expression patterns" value="Tissue enriched (liver)"/>
</dbReference>
<dbReference type="MIM" id="610385">
    <property type="type" value="gene"/>
</dbReference>
<dbReference type="neXtProt" id="NX_Q3YBM2"/>
<dbReference type="OpenTargets" id="ENSG00000106565"/>
<dbReference type="PharmGKB" id="PA162405966"/>
<dbReference type="VEuPathDB" id="HostDB:ENSG00000106565"/>
<dbReference type="eggNOG" id="ENOG502SF8T">
    <property type="taxonomic scope" value="Eukaryota"/>
</dbReference>
<dbReference type="GeneTree" id="ENSGT00530000064074"/>
<dbReference type="HOGENOM" id="CLU_090530_0_0_1"/>
<dbReference type="InParanoid" id="Q3YBM2"/>
<dbReference type="OMA" id="WEEDRCR"/>
<dbReference type="OrthoDB" id="8951938at2759"/>
<dbReference type="PAN-GO" id="Q3YBM2">
    <property type="GO annotations" value="1 GO annotation based on evolutionary models"/>
</dbReference>
<dbReference type="PhylomeDB" id="Q3YBM2"/>
<dbReference type="TreeFam" id="TF335389"/>
<dbReference type="PathwayCommons" id="Q3YBM2"/>
<dbReference type="SignaLink" id="Q3YBM2"/>
<dbReference type="BioGRID-ORCS" id="28959">
    <property type="hits" value="13 hits in 1149 CRISPR screens"/>
</dbReference>
<dbReference type="ChiTaRS" id="TMEM176B">
    <property type="organism name" value="human"/>
</dbReference>
<dbReference type="GenomeRNAi" id="28959"/>
<dbReference type="Pharos" id="Q3YBM2">
    <property type="development level" value="Tbio"/>
</dbReference>
<dbReference type="PRO" id="PR:Q3YBM2"/>
<dbReference type="Proteomes" id="UP000005640">
    <property type="component" value="Chromosome 7"/>
</dbReference>
<dbReference type="RNAct" id="Q3YBM2">
    <property type="molecule type" value="protein"/>
</dbReference>
<dbReference type="Bgee" id="ENSG00000106565">
    <property type="expression patterns" value="Expressed in right lobe of liver and 176 other cell types or tissues"/>
</dbReference>
<dbReference type="ExpressionAtlas" id="Q3YBM2">
    <property type="expression patterns" value="baseline and differential"/>
</dbReference>
<dbReference type="GO" id="GO:0031965">
    <property type="term" value="C:nuclear membrane"/>
    <property type="evidence" value="ECO:0007669"/>
    <property type="project" value="UniProtKB-SubCell"/>
</dbReference>
<dbReference type="GO" id="GO:0009887">
    <property type="term" value="P:animal organ morphogenesis"/>
    <property type="evidence" value="ECO:0000304"/>
    <property type="project" value="ProtInc"/>
</dbReference>
<dbReference type="GO" id="GO:0097028">
    <property type="term" value="P:dendritic cell differentiation"/>
    <property type="evidence" value="ECO:0007669"/>
    <property type="project" value="Ensembl"/>
</dbReference>
<dbReference type="GO" id="GO:2001199">
    <property type="term" value="P:negative regulation of dendritic cell differentiation"/>
    <property type="evidence" value="ECO:0000318"/>
    <property type="project" value="GO_Central"/>
</dbReference>
<dbReference type="InterPro" id="IPR007237">
    <property type="entry name" value="CD20-like"/>
</dbReference>
<dbReference type="InterPro" id="IPR009281">
    <property type="entry name" value="TMEM176A/TMEM176B"/>
</dbReference>
<dbReference type="PANTHER" id="PTHR15756">
    <property type="entry name" value="LR8/HCA112"/>
    <property type="match status" value="1"/>
</dbReference>
<dbReference type="PANTHER" id="PTHR15756:SF7">
    <property type="entry name" value="TRANSMEMBRANE PROTEIN 176B"/>
    <property type="match status" value="1"/>
</dbReference>
<dbReference type="Pfam" id="PF04103">
    <property type="entry name" value="CD20"/>
    <property type="match status" value="1"/>
</dbReference>
<organism>
    <name type="scientific">Homo sapiens</name>
    <name type="common">Human</name>
    <dbReference type="NCBI Taxonomy" id="9606"/>
    <lineage>
        <taxon>Eukaryota</taxon>
        <taxon>Metazoa</taxon>
        <taxon>Chordata</taxon>
        <taxon>Craniata</taxon>
        <taxon>Vertebrata</taxon>
        <taxon>Euteleostomi</taxon>
        <taxon>Mammalia</taxon>
        <taxon>Eutheria</taxon>
        <taxon>Euarchontoglires</taxon>
        <taxon>Primates</taxon>
        <taxon>Haplorrhini</taxon>
        <taxon>Catarrhini</taxon>
        <taxon>Hominidae</taxon>
        <taxon>Homo</taxon>
    </lineage>
</organism>
<comment type="function">
    <text evidence="1">May play a role in the process of maturation of dendritic cells. Required for the development of cerebellar granule cells (By similarity).</text>
</comment>
<comment type="interaction">
    <interactant intactId="EBI-2821479">
        <id>Q3YBM2</id>
    </interactant>
    <interactant intactId="EBI-399080">
        <id>Q92993</id>
        <label>KAT5</label>
    </interactant>
    <organismsDiffer>false</organismsDiffer>
    <experiments>3</experiments>
</comment>
<comment type="interaction">
    <interactant intactId="EBI-2821479">
        <id>Q3YBM2</id>
    </interactant>
    <interactant intactId="EBI-21591415">
        <id>P13473-2</id>
        <label>LAMP2</label>
    </interactant>
    <organismsDiffer>false</organismsDiffer>
    <experiments>3</experiments>
</comment>
<comment type="interaction">
    <interactant intactId="EBI-2821479">
        <id>Q3YBM2</id>
    </interactant>
    <interactant intactId="EBI-11742507">
        <id>Q8TAP4-4</id>
        <label>LMO3</label>
    </interactant>
    <organismsDiffer>false</organismsDiffer>
    <experiments>3</experiments>
</comment>
<comment type="interaction">
    <interactant intactId="EBI-2821479">
        <id>Q3YBM2</id>
    </interactant>
    <interactant intactId="EBI-1383528">
        <id>P17252</id>
        <label>PRKCA</label>
    </interactant>
    <organismsDiffer>false</organismsDiffer>
    <experiments>3</experiments>
</comment>
<comment type="interaction">
    <interactant intactId="EBI-2821479">
        <id>Q3YBM2</id>
    </interactant>
    <interactant intactId="EBI-9090795">
        <id>Q15047-2</id>
        <label>SETDB1</label>
    </interactant>
    <organismsDiffer>false</organismsDiffer>
    <experiments>3</experiments>
</comment>
<comment type="interaction">
    <interactant intactId="EBI-2821479">
        <id>Q3YBM2</id>
    </interactant>
    <interactant intactId="EBI-2800645">
        <id>Q96HP8</id>
        <label>TMEM176A</label>
    </interactant>
    <organismsDiffer>false</organismsDiffer>
    <experiments>3</experiments>
</comment>
<comment type="interaction">
    <interactant intactId="EBI-2821479">
        <id>Q3YBM2</id>
    </interactant>
    <interactant intactId="EBI-359832">
        <id>P61981</id>
        <label>YWHAG</label>
    </interactant>
    <organismsDiffer>false</organismsDiffer>
    <experiments>3</experiments>
</comment>
<comment type="subcellular location">
    <subcellularLocation>
        <location evidence="1">Nucleus membrane</location>
        <topology evidence="1">Multi-pass membrane protein</topology>
    </subcellularLocation>
</comment>
<comment type="alternative products">
    <event type="alternative splicing"/>
    <isoform>
        <id>Q3YBM2-1</id>
        <name>1</name>
        <sequence type="displayed"/>
    </isoform>
    <isoform>
        <id>Q3YBM2-2</id>
        <name>2</name>
        <sequence type="described" ref="VSP_046283"/>
    </isoform>
</comment>
<comment type="tissue specificity">
    <text evidence="7">Expressed in lung and dermal fibroblasts.</text>
</comment>
<comment type="induction">
    <text evidence="6 7">Up-regulated in fibrotic lung. Down-regulated in activated dendritic cells.</text>
</comment>
<comment type="similarity">
    <text evidence="10">Belongs to the TMEM176 family.</text>
</comment>
<comment type="sequence caution" evidence="10">
    <conflict type="erroneous termination">
        <sequence resource="EMBL-CDS" id="AAH91471"/>
    </conflict>
    <text>Truncated C-terminus.</text>
</comment>
<feature type="chain" id="PRO_0000279875" description="Transmembrane protein 176B">
    <location>
        <begin position="1"/>
        <end position="270"/>
    </location>
</feature>
<feature type="transmembrane region" description="Helical" evidence="3">
    <location>
        <begin position="65"/>
        <end position="85"/>
    </location>
</feature>
<feature type="transmembrane region" description="Helical" evidence="3">
    <location>
        <begin position="95"/>
        <end position="115"/>
    </location>
</feature>
<feature type="transmembrane region" description="Helical" evidence="3">
    <location>
        <begin position="127"/>
        <end position="147"/>
    </location>
</feature>
<feature type="transmembrane region" description="Helical" evidence="3">
    <location>
        <begin position="209"/>
        <end position="229"/>
    </location>
</feature>
<feature type="region of interest" description="Disordered" evidence="4">
    <location>
        <begin position="237"/>
        <end position="270"/>
    </location>
</feature>
<feature type="compositionally biased region" description="Polar residues" evidence="4">
    <location>
        <begin position="260"/>
        <end position="270"/>
    </location>
</feature>
<feature type="modified residue" description="Phosphoserine" evidence="11">
    <location>
        <position position="236"/>
    </location>
</feature>
<feature type="modified residue" description="Phosphoserine" evidence="11">
    <location>
        <position position="245"/>
    </location>
</feature>
<feature type="modified residue" description="Phosphoserine" evidence="2">
    <location>
        <position position="254"/>
    </location>
</feature>
<feature type="modified residue" description="Phosphoserine" evidence="11">
    <location>
        <position position="258"/>
    </location>
</feature>
<feature type="splice variant" id="VSP_046283" description="In isoform 2." evidence="9">
    <location>
        <begin position="69"/>
        <end position="105"/>
    </location>
</feature>
<feature type="sequence variant" id="VAR_057766" description="In dbSNP:rs10240587.">
    <original>G</original>
    <variation>E</variation>
    <location>
        <position position="40"/>
    </location>
</feature>
<feature type="sequence variant" id="VAR_031035" description="In dbSNP:rs11546671." evidence="7">
    <original>P</original>
    <variation>S</variation>
    <location>
        <position position="55"/>
    </location>
</feature>
<feature type="sequence variant" id="VAR_031036" description="In dbSNP:rs28434777.">
    <original>T</original>
    <variation>A</variation>
    <location>
        <position position="70"/>
    </location>
</feature>
<feature type="sequence variant" id="VAR_031037" description="In dbSNP:rs3173833." evidence="5 7 8">
    <original>S</original>
    <variation>R</variation>
    <location>
        <position position="94"/>
    </location>
</feature>
<feature type="sequence variant" id="VAR_031038" description="In dbSNP:rs2072443." evidence="5">
    <original>A</original>
    <variation>T</variation>
    <location>
        <position position="134"/>
    </location>
</feature>
<feature type="sequence variant" id="VAR_031039" description="In dbSNP:rs17256042.">
    <original>R</original>
    <variation>W</variation>
    <location>
        <position position="180"/>
    </location>
</feature>
<feature type="sequence conflict" description="In Ref. 1; AAD23440." evidence="10" ref="1">
    <original>PS</original>
    <variation>HA</variation>
    <location>
        <begin position="17"/>
        <end position="18"/>
    </location>
</feature>
<feature type="sequence conflict" description="In Ref. 3; AK129525." evidence="10" ref="3">
    <original>S</original>
    <variation>P</variation>
    <location>
        <position position="237"/>
    </location>
</feature>
<name>T176B_HUMAN</name>
<sequence>MTQNTVIVNGVAMASRPSQPTHVNVHIHQESALTQLLKAGGSLKKFLFHPGDTVPSTARIGYEQLALGVTQILLGVVSCVLGVCLSLGPWTVLSASGCAFWAGSVVIAAGAGAIVHEKHPGKLAGYISSLLTLAGFATAMAAVVLCVNSFIWQTEPFLYIDTVCDRSDPVFPTTGYRWMRRSQENQWQKEECRAYMQMLRKLFTAIRALFLAVCVLKVIVSLVSLGVGLRNLCGQSSQPLNEEGSEKRLLGENSVPPSPSREQTSTAIVL</sequence>
<protein>
    <recommendedName>
        <fullName>Transmembrane protein 176B</fullName>
    </recommendedName>
    <alternativeName>
        <fullName>Protein LR8</fullName>
    </alternativeName>
</protein>
<keyword id="KW-0025">Alternative splicing</keyword>
<keyword id="KW-0221">Differentiation</keyword>
<keyword id="KW-0472">Membrane</keyword>
<keyword id="KW-0539">Nucleus</keyword>
<keyword id="KW-0597">Phosphoprotein</keyword>
<keyword id="KW-1267">Proteomics identification</keyword>
<keyword id="KW-1185">Reference proteome</keyword>
<keyword id="KW-0812">Transmembrane</keyword>
<keyword id="KW-1133">Transmembrane helix</keyword>
<gene>
    <name type="primary">TMEM176B</name>
    <name type="synonym">LR8</name>
</gene>
<accession>Q3YBM2</accession>
<accession>B2RDK2</accession>
<accession>D3DWZ7</accession>
<accession>E9PAV4</accession>
<accession>Q5BJI2</accession>
<accession>Q9BT42</accession>
<accession>Q9Y609</accession>
<evidence type="ECO:0000250" key="1"/>
<evidence type="ECO:0000250" key="2">
    <source>
        <dbReference type="UniProtKB" id="Q925D4"/>
    </source>
</evidence>
<evidence type="ECO:0000255" key="3"/>
<evidence type="ECO:0000256" key="4">
    <source>
        <dbReference type="SAM" id="MobiDB-lite"/>
    </source>
</evidence>
<evidence type="ECO:0000269" key="5">
    <source>
    </source>
</evidence>
<evidence type="ECO:0000269" key="6">
    <source>
    </source>
</evidence>
<evidence type="ECO:0000269" key="7">
    <source>
    </source>
</evidence>
<evidence type="ECO:0000269" key="8">
    <source ref="2"/>
</evidence>
<evidence type="ECO:0000303" key="9">
    <source>
    </source>
</evidence>
<evidence type="ECO:0000305" key="10"/>
<evidence type="ECO:0007744" key="11">
    <source>
    </source>
</evidence>
<proteinExistence type="evidence at protein level"/>